<organismHost>
    <name type="scientific">Thermoproteus tenax</name>
    <dbReference type="NCBI Taxonomy" id="2271"/>
</organismHost>
<reference key="1">
    <citation type="journal article" date="1989" name="Mol. Gen. Genet.">
        <title>Identification and characterization of the genes encoding three structural proteins of the Thermoproteus tenax virus TTV1.</title>
        <authorList>
            <person name="Neumann H."/>
            <person name="Schwass V."/>
            <person name="Eckerskorn C."/>
            <person name="Zillig W."/>
        </authorList>
    </citation>
    <scope>NUCLEOTIDE SEQUENCE [GENOMIC DNA]</scope>
    <scope>PROTEIN SEQUENCE OF 2-25</scope>
</reference>
<organism>
    <name type="scientific">Thermoproteus tenax virus 1 (strain KRA1)</name>
    <name type="common">TTV1</name>
    <dbReference type="NCBI Taxonomy" id="10480"/>
    <lineage>
        <taxon>Viruses</taxon>
        <taxon>Adnaviria</taxon>
        <taxon>Zilligvirae</taxon>
        <taxon>Taleaviricota</taxon>
        <taxon>Tokiviricetes</taxon>
        <taxon>Primavirales</taxon>
        <taxon>Tristromaviridae</taxon>
        <taxon>Betatristromavirus</taxon>
        <taxon>Betatristromavirus TTV1</taxon>
    </lineage>
</organism>
<accession>P19272</accession>
<dbReference type="EMBL" id="X14855">
    <property type="protein sequence ID" value="CAA32989.1"/>
    <property type="molecule type" value="Genomic_DNA"/>
</dbReference>
<dbReference type="PIR" id="S04394">
    <property type="entry name" value="S04394"/>
</dbReference>
<dbReference type="Proteomes" id="UP000009250">
    <property type="component" value="Genome"/>
</dbReference>
<dbReference type="GO" id="GO:0019028">
    <property type="term" value="C:viral capsid"/>
    <property type="evidence" value="ECO:0007669"/>
    <property type="project" value="UniProtKB-KW"/>
</dbReference>
<name>COA3_TTV1K</name>
<keyword id="KW-0167">Capsid protein</keyword>
<keyword id="KW-0903">Direct protein sequencing</keyword>
<keyword id="KW-1185">Reference proteome</keyword>
<keyword id="KW-0946">Virion</keyword>
<evidence type="ECO:0000269" key="1">
    <source>
    </source>
</evidence>
<evidence type="ECO:0000305" key="2"/>
<feature type="initiator methionine" description="Removed; by host" evidence="1">
    <location>
        <position position="1"/>
    </location>
</feature>
<feature type="chain" id="PRO_0000222954" description="Coat protein TP3">
    <location>
        <begin position="2"/>
        <end position="160"/>
    </location>
</feature>
<proteinExistence type="evidence at protein level"/>
<sequence length="160" mass="18111">MVEIKLVNKEIIKFGLALGIVNELNEYLYAAMPPMYDILSKLYGYGRTVNAMLYSVLFNLLESRIDTLRRLDLSKFFAVVAYMDAVKDTVELAINGYAYVTTSGFTVYPASQITGTYESDFSQAKAVPANTTATQVWFAPKKFALITQNKIYTFLAPYWF</sequence>
<protein>
    <recommendedName>
        <fullName>Coat protein TP3</fullName>
    </recommendedName>
</protein>
<comment type="subcellular location">
    <subcellularLocation>
        <location evidence="2">Virion</location>
    </subcellularLocation>
</comment>